<sequence>MIWNTNLRWRLPVACLLLEVALIALFGVFVRYDMDADPHWVQEKVIKNLSTDLENEFYYRYPSFQDVHVMIFVGFGFLMTFLQRYGYSSVGFNFLLAAFGIQWALLMQGWLQSFDGRYILVDLENLINADFCVGSVCVAFGAVLGKVSPVQLLIMTLFQVTLFSINEYILLNLLEVKDSGGSMTIHAFGAYFGLTVAWILYRPNLHLSKERQSSTYHSDLFAMIGTLFLWMYWPSFNSAISNHGDAQHRAAINTYCSLAACVLTSVALSSALHRKGKLDMVHIQNATLAGGVGLGTVAELMVLPFGSLIIGFVCGIVSTLGFVYLTPFLESRLHIQDTCGVHNLHGIPGIIGGIAGAVTASIANIDLYGEEGLAYAFGIERSKLNWSPNMQGRFQAAGLFVSLAMALVGGVIVGVILRLPFWGQAPDENCFEDAVYWEIPKEPKSTALRSEDSSIKPPEP</sequence>
<protein>
    <recommendedName>
        <fullName>Ammonium transporter Rh type C</fullName>
    </recommendedName>
    <alternativeName>
        <fullName>Rhesus blood group family type C glycoprotein</fullName>
        <shortName>Rh family type C glycoprotein</shortName>
        <shortName>Rh type C glycoprotein</shortName>
    </alternativeName>
</protein>
<proteinExistence type="evidence at transcript level"/>
<gene>
    <name type="primary">RHCG</name>
</gene>
<evidence type="ECO:0000250" key="1"/>
<evidence type="ECO:0000250" key="2">
    <source>
        <dbReference type="UniProtKB" id="Q9UBD6"/>
    </source>
</evidence>
<evidence type="ECO:0000255" key="3"/>
<evidence type="ECO:0000305" key="4"/>
<feature type="chain" id="PRO_0000283575" description="Ammonium transporter Rh type C">
    <location>
        <begin position="1"/>
        <end position="460"/>
    </location>
</feature>
<feature type="topological domain" description="Cytoplasmic" evidence="3">
    <location>
        <begin position="1"/>
        <end position="9"/>
    </location>
</feature>
<feature type="transmembrane region" description="Helical" evidence="3">
    <location>
        <begin position="10"/>
        <end position="30"/>
    </location>
</feature>
<feature type="topological domain" description="Extracellular" evidence="3">
    <location>
        <begin position="31"/>
        <end position="61"/>
    </location>
</feature>
<feature type="transmembrane region" description="Helical" evidence="3">
    <location>
        <begin position="62"/>
        <end position="82"/>
    </location>
</feature>
<feature type="topological domain" description="Cytoplasmic" evidence="3">
    <location>
        <begin position="83"/>
        <end position="89"/>
    </location>
</feature>
<feature type="transmembrane region" description="Helical" evidence="3">
    <location>
        <begin position="90"/>
        <end position="110"/>
    </location>
</feature>
<feature type="topological domain" description="Extracellular" evidence="3">
    <location>
        <begin position="111"/>
        <end position="125"/>
    </location>
</feature>
<feature type="transmembrane region" description="Helical" evidence="3">
    <location>
        <begin position="126"/>
        <end position="145"/>
    </location>
</feature>
<feature type="topological domain" description="Cytoplasmic" evidence="3">
    <location>
        <begin position="146"/>
        <end position="151"/>
    </location>
</feature>
<feature type="transmembrane region" description="Helical" evidence="3">
    <location>
        <begin position="152"/>
        <end position="174"/>
    </location>
</feature>
<feature type="topological domain" description="Extracellular" evidence="3">
    <location>
        <begin position="175"/>
        <end position="179"/>
    </location>
</feature>
<feature type="transmembrane region" description="Helical" evidence="3">
    <location>
        <begin position="180"/>
        <end position="200"/>
    </location>
</feature>
<feature type="topological domain" description="Cytoplasmic" evidence="3">
    <location>
        <begin position="201"/>
        <end position="219"/>
    </location>
</feature>
<feature type="transmembrane region" description="Helical" evidence="3">
    <location>
        <begin position="220"/>
        <end position="240"/>
    </location>
</feature>
<feature type="topological domain" description="Extracellular" evidence="3">
    <location>
        <begin position="241"/>
        <end position="251"/>
    </location>
</feature>
<feature type="transmembrane region" description="Helical" evidence="3">
    <location>
        <begin position="252"/>
        <end position="272"/>
    </location>
</feature>
<feature type="topological domain" description="Cytoplasmic" evidence="3">
    <location>
        <begin position="273"/>
        <end position="285"/>
    </location>
</feature>
<feature type="transmembrane region" description="Helical" evidence="3">
    <location>
        <begin position="286"/>
        <end position="303"/>
    </location>
</feature>
<feature type="topological domain" description="Extracellular" evidence="3">
    <location>
        <begin position="304"/>
        <end position="306"/>
    </location>
</feature>
<feature type="transmembrane region" description="Helical" evidence="3">
    <location>
        <begin position="307"/>
        <end position="329"/>
    </location>
</feature>
<feature type="topological domain" description="Cytoplasmic" evidence="3">
    <location>
        <begin position="330"/>
        <end position="346"/>
    </location>
</feature>
<feature type="transmembrane region" description="Helical" evidence="3">
    <location>
        <begin position="347"/>
        <end position="367"/>
    </location>
</feature>
<feature type="topological domain" description="Extracellular" evidence="3">
    <location>
        <begin position="368"/>
        <end position="396"/>
    </location>
</feature>
<feature type="transmembrane region" description="Helical" evidence="3">
    <location>
        <begin position="397"/>
        <end position="417"/>
    </location>
</feature>
<feature type="topological domain" description="Cytoplasmic" evidence="3">
    <location>
        <begin position="418"/>
        <end position="460"/>
    </location>
</feature>
<feature type="glycosylation site" description="N-linked (GlcNAc...) asparagine" evidence="3">
    <location>
        <position position="48"/>
    </location>
</feature>
<feature type="sequence conflict" description="In Ref. 1; AAK14650." evidence="4" ref="1">
    <location>
        <position position="95"/>
    </location>
</feature>
<feature type="sequence conflict" description="In Ref. 2; AAI11289." evidence="4" ref="2">
    <original>S</original>
    <variation>T</variation>
    <location>
        <position position="307"/>
    </location>
</feature>
<reference key="1">
    <citation type="journal article" date="2001" name="Blood Cells Mol. Dis.">
        <title>New insights into the Rh superfamily of genes and proteins in erythroid cells and nonerythroid tissues.</title>
        <authorList>
            <person name="Huang C.-H."/>
            <person name="Liu P.Z."/>
        </authorList>
    </citation>
    <scope>NUCLEOTIDE SEQUENCE [MRNA]</scope>
</reference>
<reference key="2">
    <citation type="submission" date="2005-12" db="EMBL/GenBank/DDBJ databases">
        <authorList>
            <consortium name="NIH - Mammalian Gene Collection (MGC) project"/>
        </authorList>
    </citation>
    <scope>NUCLEOTIDE SEQUENCE [LARGE SCALE MRNA]</scope>
    <source>
        <strain>Crossbred X Angus</strain>
        <tissue>Liver</tissue>
    </source>
</reference>
<name>RHCG_BOVIN</name>
<comment type="function">
    <text evidence="2">Ammonium transporter involved in the maintenance of acid-base homeostasis. Transports ammonium and its related derivative methylammonium across the plasma membrane of epithelial cells likely contributing to renal transepithelial ammonia transport and ammonia metabolism. Postulated to primarily mediate an electroneutral bidirectional transport of NH3 ammonia species according to a mechanism that implies interaction of an NH4(+) ion with acidic residues of the pore entry followed by dissociation of NH4(+) into NH3 and H(+). As a result NH3 transits through the central pore and is protonated on the extracellular side reforming NH4(+) (By similarity). May act as a CO2 channel providing for renal acid secretion (By similarity).</text>
</comment>
<comment type="catalytic activity">
    <reaction evidence="2">
        <text>NH4(+)(in) = NH4(+)(out)</text>
        <dbReference type="Rhea" id="RHEA:28747"/>
        <dbReference type="ChEBI" id="CHEBI:28938"/>
    </reaction>
    <physiologicalReaction direction="left-to-right" evidence="2">
        <dbReference type="Rhea" id="RHEA:28748"/>
    </physiologicalReaction>
    <physiologicalReaction direction="right-to-left" evidence="2">
        <dbReference type="Rhea" id="RHEA:28749"/>
    </physiologicalReaction>
</comment>
<comment type="catalytic activity">
    <reaction evidence="2">
        <text>methylamine(out) = methylamine(in)</text>
        <dbReference type="Rhea" id="RHEA:74391"/>
        <dbReference type="ChEBI" id="CHEBI:59338"/>
    </reaction>
    <physiologicalReaction direction="left-to-right" evidence="2">
        <dbReference type="Rhea" id="RHEA:74392"/>
    </physiologicalReaction>
</comment>
<comment type="catalytic activity">
    <reaction evidence="2">
        <text>CO2(out) = CO2(in)</text>
        <dbReference type="Rhea" id="RHEA:74891"/>
        <dbReference type="ChEBI" id="CHEBI:16526"/>
    </reaction>
    <physiologicalReaction direction="left-to-right" evidence="2">
        <dbReference type="Rhea" id="RHEA:74892"/>
    </physiologicalReaction>
</comment>
<comment type="subunit">
    <text evidence="2">Homotrimer.</text>
</comment>
<comment type="subcellular location">
    <subcellularLocation>
        <location evidence="1">Apical cell membrane</location>
        <topology evidence="1">Multi-pass membrane protein</topology>
    </subcellularLocation>
    <text evidence="1">Also detected at the basolateral membrane and in subapical vesicles.</text>
</comment>
<comment type="PTM">
    <text evidence="1">N-glycosylated.</text>
</comment>
<comment type="similarity">
    <text evidence="4">Belongs to the ammonium transporter (TC 2.A.49) family. Rh subfamily.</text>
</comment>
<keyword id="KW-0924">Ammonia transport</keyword>
<keyword id="KW-1003">Cell membrane</keyword>
<keyword id="KW-0325">Glycoprotein</keyword>
<keyword id="KW-0472">Membrane</keyword>
<keyword id="KW-1185">Reference proteome</keyword>
<keyword id="KW-0812">Transmembrane</keyword>
<keyword id="KW-1133">Transmembrane helix</keyword>
<keyword id="KW-0813">Transport</keyword>
<dbReference type="EMBL" id="AY013260">
    <property type="protein sequence ID" value="AAK14650.1"/>
    <property type="molecule type" value="mRNA"/>
</dbReference>
<dbReference type="EMBL" id="BC111288">
    <property type="protein sequence ID" value="AAI11289.1"/>
    <property type="molecule type" value="mRNA"/>
</dbReference>
<dbReference type="RefSeq" id="NP_776597.1">
    <property type="nucleotide sequence ID" value="NM_174172.2"/>
</dbReference>
<dbReference type="RefSeq" id="XP_024837367.1">
    <property type="nucleotide sequence ID" value="XM_024981599.2"/>
</dbReference>
<dbReference type="RefSeq" id="XP_024837368.1">
    <property type="nucleotide sequence ID" value="XM_024981600.2"/>
</dbReference>
<dbReference type="SMR" id="Q2T9S6"/>
<dbReference type="FunCoup" id="Q2T9S6">
    <property type="interactions" value="89"/>
</dbReference>
<dbReference type="STRING" id="9913.ENSBTAP00000007196"/>
<dbReference type="GlyCosmos" id="Q2T9S6">
    <property type="glycosylation" value="1 site, No reported glycans"/>
</dbReference>
<dbReference type="GlyGen" id="Q2T9S6">
    <property type="glycosylation" value="1 site"/>
</dbReference>
<dbReference type="PaxDb" id="9913-ENSBTAP00000007196"/>
<dbReference type="Ensembl" id="ENSBTAT00000007196.6">
    <property type="protein sequence ID" value="ENSBTAP00000007196.6"/>
    <property type="gene ID" value="ENSBTAG00000005471.6"/>
</dbReference>
<dbReference type="GeneID" id="281456"/>
<dbReference type="KEGG" id="bta:281456"/>
<dbReference type="CTD" id="51458"/>
<dbReference type="VGNC" id="VGNC:33938">
    <property type="gene designation" value="RHCG"/>
</dbReference>
<dbReference type="eggNOG" id="KOG3796">
    <property type="taxonomic scope" value="Eukaryota"/>
</dbReference>
<dbReference type="GeneTree" id="ENSGT00950000182844"/>
<dbReference type="HOGENOM" id="CLU_021386_0_0_1"/>
<dbReference type="InParanoid" id="Q2T9S6"/>
<dbReference type="OrthoDB" id="534912at2759"/>
<dbReference type="TreeFam" id="TF314450"/>
<dbReference type="Proteomes" id="UP000009136">
    <property type="component" value="Chromosome 21"/>
</dbReference>
<dbReference type="GO" id="GO:0016324">
    <property type="term" value="C:apical plasma membrane"/>
    <property type="evidence" value="ECO:0000250"/>
    <property type="project" value="UniProtKB"/>
</dbReference>
<dbReference type="GO" id="GO:0016323">
    <property type="term" value="C:basolateral plasma membrane"/>
    <property type="evidence" value="ECO:0000318"/>
    <property type="project" value="GO_Central"/>
</dbReference>
<dbReference type="GO" id="GO:0031410">
    <property type="term" value="C:cytoplasmic vesicle"/>
    <property type="evidence" value="ECO:0000250"/>
    <property type="project" value="UniProtKB"/>
</dbReference>
<dbReference type="GO" id="GO:0005886">
    <property type="term" value="C:plasma membrane"/>
    <property type="evidence" value="ECO:0000318"/>
    <property type="project" value="GO_Central"/>
</dbReference>
<dbReference type="GO" id="GO:0008519">
    <property type="term" value="F:ammonium channel activity"/>
    <property type="evidence" value="ECO:0000250"/>
    <property type="project" value="UniProtKB"/>
</dbReference>
<dbReference type="GO" id="GO:0030506">
    <property type="term" value="F:ankyrin binding"/>
    <property type="evidence" value="ECO:0007669"/>
    <property type="project" value="Ensembl"/>
</dbReference>
<dbReference type="GO" id="GO:0035379">
    <property type="term" value="F:carbon dioxide transmembrane transporter activity"/>
    <property type="evidence" value="ECO:0000250"/>
    <property type="project" value="UniProtKB"/>
</dbReference>
<dbReference type="GO" id="GO:0042802">
    <property type="term" value="F:identical protein binding"/>
    <property type="evidence" value="ECO:0007669"/>
    <property type="project" value="Ensembl"/>
</dbReference>
<dbReference type="GO" id="GO:0097272">
    <property type="term" value="P:ammonium homeostasis"/>
    <property type="evidence" value="ECO:0000318"/>
    <property type="project" value="GO_Central"/>
</dbReference>
<dbReference type="GO" id="GO:0072488">
    <property type="term" value="P:ammonium transmembrane transport"/>
    <property type="evidence" value="ECO:0000250"/>
    <property type="project" value="UniProtKB"/>
</dbReference>
<dbReference type="GO" id="GO:0006873">
    <property type="term" value="P:intracellular monoatomic ion homeostasis"/>
    <property type="evidence" value="ECO:0007669"/>
    <property type="project" value="Ensembl"/>
</dbReference>
<dbReference type="GO" id="GO:0006885">
    <property type="term" value="P:regulation of pH"/>
    <property type="evidence" value="ECO:0007669"/>
    <property type="project" value="Ensembl"/>
</dbReference>
<dbReference type="GO" id="GO:0070634">
    <property type="term" value="P:transepithelial ammonium transport"/>
    <property type="evidence" value="ECO:0007669"/>
    <property type="project" value="Ensembl"/>
</dbReference>
<dbReference type="FunFam" id="1.10.3430.10:FF:000001">
    <property type="entry name" value="Ammonium transporter Rh type C"/>
    <property type="match status" value="1"/>
</dbReference>
<dbReference type="Gene3D" id="1.10.3430.10">
    <property type="entry name" value="Ammonium transporter AmtB like domains"/>
    <property type="match status" value="1"/>
</dbReference>
<dbReference type="InterPro" id="IPR029020">
    <property type="entry name" value="Ammonium/urea_transptr"/>
</dbReference>
<dbReference type="InterPro" id="IPR024041">
    <property type="entry name" value="NH4_transpt_AmtB-like_dom"/>
</dbReference>
<dbReference type="InterPro" id="IPR002229">
    <property type="entry name" value="RhesusRHD"/>
</dbReference>
<dbReference type="PANTHER" id="PTHR11730">
    <property type="entry name" value="AMMONIUM TRANSPORTER"/>
    <property type="match status" value="1"/>
</dbReference>
<dbReference type="PANTHER" id="PTHR11730:SF30">
    <property type="entry name" value="AMMONIUM TRANSPORTER RH TYPE C"/>
    <property type="match status" value="1"/>
</dbReference>
<dbReference type="Pfam" id="PF00909">
    <property type="entry name" value="Ammonium_transp"/>
    <property type="match status" value="1"/>
</dbReference>
<dbReference type="PRINTS" id="PR00342">
    <property type="entry name" value="RHESUSRHD"/>
</dbReference>
<dbReference type="SUPFAM" id="SSF111352">
    <property type="entry name" value="Ammonium transporter"/>
    <property type="match status" value="1"/>
</dbReference>
<organism>
    <name type="scientific">Bos taurus</name>
    <name type="common">Bovine</name>
    <dbReference type="NCBI Taxonomy" id="9913"/>
    <lineage>
        <taxon>Eukaryota</taxon>
        <taxon>Metazoa</taxon>
        <taxon>Chordata</taxon>
        <taxon>Craniata</taxon>
        <taxon>Vertebrata</taxon>
        <taxon>Euteleostomi</taxon>
        <taxon>Mammalia</taxon>
        <taxon>Eutheria</taxon>
        <taxon>Laurasiatheria</taxon>
        <taxon>Artiodactyla</taxon>
        <taxon>Ruminantia</taxon>
        <taxon>Pecora</taxon>
        <taxon>Bovidae</taxon>
        <taxon>Bovinae</taxon>
        <taxon>Bos</taxon>
    </lineage>
</organism>
<accession>Q2T9S6</accession>
<accession>Q95M76</accession>